<gene>
    <name type="primary">Akr1e2</name>
    <name type="synonym">Akr1cl2</name>
</gene>
<reference key="1">
    <citation type="journal article" date="2004" name="Genome Res.">
        <title>The status, quality, and expansion of the NIH full-length cDNA project: the Mammalian Gene Collection (MGC).</title>
        <authorList>
            <consortium name="The MGC Project Team"/>
        </authorList>
    </citation>
    <scope>NUCLEOTIDE SEQUENCE [LARGE SCALE MRNA]</scope>
    <source>
        <tissue>Ovary</tissue>
    </source>
</reference>
<protein>
    <recommendedName>
        <fullName>1,5-anhydro-D-fructose reductase</fullName>
        <shortName>AF reductase</shortName>
        <ecNumber evidence="4">1.1.1.263</ecNumber>
    </recommendedName>
    <alternativeName>
        <fullName>Aldo-keto reductase family 1 member C-like protein 2</fullName>
    </alternativeName>
    <alternativeName>
        <fullName>Aldo-keto reductase family 1 member E2</fullName>
    </alternativeName>
</protein>
<proteinExistence type="evidence at transcript level"/>
<comment type="function">
    <text evidence="4">Catalyzes the NADPH-dependent reduction of 1,5-anhydro-D-fructose (AF) to 1,5-anhydro-D-glucitol.</text>
</comment>
<comment type="catalytic activity">
    <reaction evidence="4">
        <text>1,5-anhydro-D-glucitol + NADP(+) = 1,5-anhydro-D-fructose + NADPH + H(+)</text>
        <dbReference type="Rhea" id="RHEA:20665"/>
        <dbReference type="ChEBI" id="CHEBI:15378"/>
        <dbReference type="ChEBI" id="CHEBI:16070"/>
        <dbReference type="ChEBI" id="CHEBI:16715"/>
        <dbReference type="ChEBI" id="CHEBI:57783"/>
        <dbReference type="ChEBI" id="CHEBI:58349"/>
        <dbReference type="EC" id="1.1.1.263"/>
    </reaction>
</comment>
<comment type="activity regulation">
    <text evidence="3">Inhibited by p-chloromercuribenzoic acid and alkyliodines.</text>
</comment>
<comment type="subunit">
    <text evidence="3">Monomer.</text>
</comment>
<comment type="subcellular location">
    <subcellularLocation>
        <location evidence="5">Cytoplasm</location>
    </subcellularLocation>
</comment>
<comment type="similarity">
    <text evidence="5">Belongs to the aldo/keto reductase family.</text>
</comment>
<organism>
    <name type="scientific">Rattus norvegicus</name>
    <name type="common">Rat</name>
    <dbReference type="NCBI Taxonomy" id="10116"/>
    <lineage>
        <taxon>Eukaryota</taxon>
        <taxon>Metazoa</taxon>
        <taxon>Chordata</taxon>
        <taxon>Craniata</taxon>
        <taxon>Vertebrata</taxon>
        <taxon>Euteleostomi</taxon>
        <taxon>Mammalia</taxon>
        <taxon>Eutheria</taxon>
        <taxon>Euarchontoglires</taxon>
        <taxon>Glires</taxon>
        <taxon>Rodentia</taxon>
        <taxon>Myomorpha</taxon>
        <taxon>Muroidea</taxon>
        <taxon>Muridae</taxon>
        <taxon>Murinae</taxon>
        <taxon>Rattus</taxon>
    </lineage>
</organism>
<name>AKCL2_RAT</name>
<accession>Q5U1Y4</accession>
<keyword id="KW-0963">Cytoplasm</keyword>
<keyword id="KW-0521">NADP</keyword>
<keyword id="KW-0560">Oxidoreductase</keyword>
<keyword id="KW-1185">Reference proteome</keyword>
<dbReference type="EC" id="1.1.1.263" evidence="4"/>
<dbReference type="EMBL" id="BC086397">
    <property type="protein sequence ID" value="AAH86397.1"/>
    <property type="molecule type" value="mRNA"/>
</dbReference>
<dbReference type="RefSeq" id="NP_001008343.1">
    <property type="nucleotide sequence ID" value="NM_001008342.1"/>
</dbReference>
<dbReference type="SMR" id="Q5U1Y4"/>
<dbReference type="FunCoup" id="Q5U1Y4">
    <property type="interactions" value="272"/>
</dbReference>
<dbReference type="STRING" id="10116.ENSRNOP00000023133"/>
<dbReference type="PhosphoSitePlus" id="Q5U1Y4"/>
<dbReference type="PaxDb" id="10116-ENSRNOP00000023133"/>
<dbReference type="Ensembl" id="ENSRNOT00000023133.8">
    <property type="protein sequence ID" value="ENSRNOP00000023133.5"/>
    <property type="gene ID" value="ENSRNOG00000017165.8"/>
</dbReference>
<dbReference type="GeneID" id="307091"/>
<dbReference type="KEGG" id="rno:307091"/>
<dbReference type="UCSC" id="RGD:1309599">
    <property type="organism name" value="rat"/>
</dbReference>
<dbReference type="AGR" id="RGD:1309599"/>
<dbReference type="CTD" id="83592"/>
<dbReference type="RGD" id="1309599">
    <property type="gene designation" value="Akr1e2"/>
</dbReference>
<dbReference type="eggNOG" id="KOG1577">
    <property type="taxonomic scope" value="Eukaryota"/>
</dbReference>
<dbReference type="GeneTree" id="ENSGT00940000153272"/>
<dbReference type="HOGENOM" id="CLU_023205_0_0_1"/>
<dbReference type="InParanoid" id="Q5U1Y4"/>
<dbReference type="OMA" id="AWKAMEG"/>
<dbReference type="OrthoDB" id="3898at9989"/>
<dbReference type="PhylomeDB" id="Q5U1Y4"/>
<dbReference type="TreeFam" id="TF106492"/>
<dbReference type="PRO" id="PR:Q5U1Y4"/>
<dbReference type="Proteomes" id="UP000002494">
    <property type="component" value="Chromosome 17"/>
</dbReference>
<dbReference type="Bgee" id="ENSRNOG00000017165">
    <property type="expression patterns" value="Expressed in liver and 20 other cell types or tissues"/>
</dbReference>
<dbReference type="GO" id="GO:0005829">
    <property type="term" value="C:cytosol"/>
    <property type="evidence" value="ECO:0000318"/>
    <property type="project" value="GO_Central"/>
</dbReference>
<dbReference type="GO" id="GO:0050571">
    <property type="term" value="F:1,5-anhydro-D-fructose reductase activity"/>
    <property type="evidence" value="ECO:0007669"/>
    <property type="project" value="UniProtKB-EC"/>
</dbReference>
<dbReference type="GO" id="GO:0004032">
    <property type="term" value="F:aldose reductase (NADPH) activity"/>
    <property type="evidence" value="ECO:0000318"/>
    <property type="project" value="GO_Central"/>
</dbReference>
<dbReference type="GO" id="GO:0016491">
    <property type="term" value="F:oxidoreductase activity"/>
    <property type="evidence" value="ECO:0000266"/>
    <property type="project" value="RGD"/>
</dbReference>
<dbReference type="FunFam" id="3.20.20.100:FF:000030">
    <property type="entry name" value="Aldo-keto reductase family 1 member E2"/>
    <property type="match status" value="1"/>
</dbReference>
<dbReference type="Gene3D" id="3.20.20.100">
    <property type="entry name" value="NADP-dependent oxidoreductase domain"/>
    <property type="match status" value="1"/>
</dbReference>
<dbReference type="InterPro" id="IPR020471">
    <property type="entry name" value="AKR"/>
</dbReference>
<dbReference type="InterPro" id="IPR018170">
    <property type="entry name" value="Aldo/ket_reductase_CS"/>
</dbReference>
<dbReference type="InterPro" id="IPR023210">
    <property type="entry name" value="NADP_OxRdtase_dom"/>
</dbReference>
<dbReference type="InterPro" id="IPR036812">
    <property type="entry name" value="NADP_OxRdtase_dom_sf"/>
</dbReference>
<dbReference type="PANTHER" id="PTHR11732">
    <property type="entry name" value="ALDO/KETO REDUCTASE"/>
    <property type="match status" value="1"/>
</dbReference>
<dbReference type="Pfam" id="PF00248">
    <property type="entry name" value="Aldo_ket_red"/>
    <property type="match status" value="1"/>
</dbReference>
<dbReference type="PIRSF" id="PIRSF000097">
    <property type="entry name" value="AKR"/>
    <property type="match status" value="1"/>
</dbReference>
<dbReference type="PRINTS" id="PR00069">
    <property type="entry name" value="ALDKETRDTASE"/>
</dbReference>
<dbReference type="SUPFAM" id="SSF51430">
    <property type="entry name" value="NAD(P)-linked oxidoreductase"/>
    <property type="match status" value="1"/>
</dbReference>
<dbReference type="PROSITE" id="PS00798">
    <property type="entry name" value="ALDOKETO_REDUCTASE_1"/>
    <property type="match status" value="1"/>
</dbReference>
<dbReference type="PROSITE" id="PS00062">
    <property type="entry name" value="ALDOKETO_REDUCTASE_2"/>
    <property type="match status" value="1"/>
</dbReference>
<dbReference type="PROSITE" id="PS00063">
    <property type="entry name" value="ALDOKETO_REDUCTASE_3"/>
    <property type="match status" value="1"/>
</dbReference>
<feature type="chain" id="PRO_0000376896" description="1,5-anhydro-D-fructose reductase">
    <location>
        <begin position="1"/>
        <end position="301"/>
    </location>
</feature>
<feature type="active site" description="Proton donor" evidence="1">
    <location>
        <position position="40"/>
    </location>
</feature>
<feature type="binding site" evidence="1">
    <location>
        <position position="35"/>
    </location>
    <ligand>
        <name>NADP(+)</name>
        <dbReference type="ChEBI" id="CHEBI:58349"/>
    </ligand>
</feature>
<feature type="binding site" evidence="1">
    <location>
        <position position="102"/>
    </location>
    <ligand>
        <name>substrate</name>
    </ligand>
</feature>
<feature type="binding site" evidence="1">
    <location>
        <position position="175"/>
    </location>
    <ligand>
        <name>NADP(+)</name>
        <dbReference type="ChEBI" id="CHEBI:58349"/>
    </ligand>
</feature>
<feature type="binding site" evidence="1">
    <location>
        <begin position="246"/>
        <end position="258"/>
    </location>
    <ligand>
        <name>NADP(+)</name>
        <dbReference type="ChEBI" id="CHEBI:58349"/>
    </ligand>
</feature>
<feature type="site" description="Lowers pKa of active site Tyr" evidence="2">
    <location>
        <position position="69"/>
    </location>
</feature>
<evidence type="ECO:0000250" key="1">
    <source>
        <dbReference type="UniProtKB" id="O60218"/>
    </source>
</evidence>
<evidence type="ECO:0000250" key="2">
    <source>
        <dbReference type="UniProtKB" id="P14550"/>
    </source>
</evidence>
<evidence type="ECO:0000250" key="3">
    <source>
        <dbReference type="UniProtKB" id="P82125"/>
    </source>
</evidence>
<evidence type="ECO:0000250" key="4">
    <source>
        <dbReference type="UniProtKB" id="Q9DCT1"/>
    </source>
</evidence>
<evidence type="ECO:0000305" key="5"/>
<sequence>MHQIPTVGLGTWKASPGEVTDAVKVAINLGYRHFDCAYLYHNESEVGMGIKEKIKEGVVKRDELFIVSKLWCTYHKQSLVKTACINTLEALNLDYLDLYLIHWPMGFKPGDKDIPLDRSGKVIPSHTSFLDTWEAMEDLVIEGLVKNIGVSNFNHEQLDRLLNKPGLRIKPITNQIECHPYLNQKSLIDFCHGRNVSVTAYRPLGGSRDGVHLMDDIVIRKIAKKHGKSPAQILIRFQIQRNLIVIPKSVNPSRIRENIQVFDFELTEKDMEELLSLDKNLRLATFPSTENHKDYPFHIEY</sequence>